<proteinExistence type="inferred from homology"/>
<protein>
    <recommendedName>
        <fullName evidence="1">Probable phosphoketolase</fullName>
        <ecNumber evidence="1">4.1.2.-</ecNumber>
    </recommendedName>
</protein>
<name>PHK_NOCFA</name>
<keyword id="KW-0456">Lyase</keyword>
<keyword id="KW-1185">Reference proteome</keyword>
<keyword id="KW-0786">Thiamine pyrophosphate</keyword>
<comment type="cofactor">
    <cofactor evidence="1">
        <name>thiamine diphosphate</name>
        <dbReference type="ChEBI" id="CHEBI:58937"/>
    </cofactor>
</comment>
<comment type="similarity">
    <text evidence="1">Belongs to the XFP family.</text>
</comment>
<reference key="1">
    <citation type="journal article" date="2004" name="Proc. Natl. Acad. Sci. U.S.A.">
        <title>The complete genomic sequence of Nocardia farcinica IFM 10152.</title>
        <authorList>
            <person name="Ishikawa J."/>
            <person name="Yamashita A."/>
            <person name="Mikami Y."/>
            <person name="Hoshino Y."/>
            <person name="Kurita H."/>
            <person name="Hotta K."/>
            <person name="Shiba T."/>
            <person name="Hattori M."/>
        </authorList>
    </citation>
    <scope>NUCLEOTIDE SEQUENCE [LARGE SCALE GENOMIC DNA]</scope>
    <source>
        <strain>IFM 10152</strain>
    </source>
</reference>
<sequence length="822" mass="90907">MTQMASAGGDTSADNVGAHGGRTVAPVPYELTEAAGPLDRAELAALDAWWRAANYLSVGQIYLMANPLLTEPLRPEHIKPRLLGHFGTVPGLNLVWTHANRVIRQRGLDAVFVAGPGHGGPGPNACAWLEGTYSELYSHIPRDGEGMAALFAQFSFPGGVPSHCAPETPGSFHEGGELGYSLLHAYGAALDNPDLTVFCVIGDGEAETGPLATSWHGNKFLNPGRDGAVLPILALNEYKIANPTLFARIPEPELINLLEGYGHEPIVVAGDDPGVVHQRLAAAMDTCMNRIAQIQRAARDGADGSRPAWPMIVLRTPKGWTCPPVVDGDRVEGTFRAHQVPLPAARTDDGHRAVLEQWLRSYRPEELFDDRGRPVPELLALAPEGDRRMSANPVANGGALVRDLRLPDWREFGVEVKTPGGSTHEATRVLGGWLREVTRLNPHNFLTFAPDELASNRLQDILEVTGRDWQAEVGEYDVALDRSGRVIEVLSEHICQGLLEGYLLTGRHGVFTCYEAFIHIVDAMFNQHAKWLDASAAVPWRRPLASLNYLLSSHVWRQDHNGFTHQDPGFLDVVLNKKPEIVRVYLPPDANTLLSTYDHCLRSRHYVNVVVAGKQPQEDWLSVEQAAVHCARGLGIWEWACHNDDPGTTPDVVLACAGDVPTLETLAAAAILRDRLPRLRVRVINVVDLMRLLPAEEHPHGLPDREFDTLFTTASPIIFAFHGYPWLIHRLTYRRTNHDGLHVRGYKEEGTTTTPFDMVMLNDLDRYHLVMDVIDRVPGLRETAAGLRQEMVDARWRARAWTREHGADIPVVADWTWPEPSR</sequence>
<gene>
    <name type="ordered locus">NFA_13300</name>
</gene>
<evidence type="ECO:0000255" key="1">
    <source>
        <dbReference type="HAMAP-Rule" id="MF_01403"/>
    </source>
</evidence>
<accession>Q5Z066</accession>
<dbReference type="EC" id="4.1.2.-" evidence="1"/>
<dbReference type="EMBL" id="AP006618">
    <property type="protein sequence ID" value="BAD56175.1"/>
    <property type="molecule type" value="Genomic_DNA"/>
</dbReference>
<dbReference type="RefSeq" id="WP_011207860.1">
    <property type="nucleotide sequence ID" value="NC_006361.1"/>
</dbReference>
<dbReference type="SMR" id="Q5Z066"/>
<dbReference type="STRING" id="247156.NFA_13300"/>
<dbReference type="GeneID" id="61132152"/>
<dbReference type="KEGG" id="nfa:NFA_13300"/>
<dbReference type="eggNOG" id="COG3957">
    <property type="taxonomic scope" value="Bacteria"/>
</dbReference>
<dbReference type="HOGENOM" id="CLU_013954_2_0_11"/>
<dbReference type="Proteomes" id="UP000006820">
    <property type="component" value="Chromosome"/>
</dbReference>
<dbReference type="GO" id="GO:0016832">
    <property type="term" value="F:aldehyde-lyase activity"/>
    <property type="evidence" value="ECO:0007669"/>
    <property type="project" value="UniProtKB-UniRule"/>
</dbReference>
<dbReference type="GO" id="GO:0000287">
    <property type="term" value="F:magnesium ion binding"/>
    <property type="evidence" value="ECO:0007669"/>
    <property type="project" value="UniProtKB-ARBA"/>
</dbReference>
<dbReference type="GO" id="GO:0005975">
    <property type="term" value="P:carbohydrate metabolic process"/>
    <property type="evidence" value="ECO:0007669"/>
    <property type="project" value="InterPro"/>
</dbReference>
<dbReference type="Gene3D" id="3.40.50.920">
    <property type="match status" value="1"/>
</dbReference>
<dbReference type="Gene3D" id="3.40.50.970">
    <property type="match status" value="2"/>
</dbReference>
<dbReference type="HAMAP" id="MF_01403">
    <property type="entry name" value="Phosphoketolase"/>
    <property type="match status" value="1"/>
</dbReference>
<dbReference type="InterPro" id="IPR023962">
    <property type="entry name" value="Phosphoketolase"/>
</dbReference>
<dbReference type="InterPro" id="IPR029061">
    <property type="entry name" value="THDP-binding"/>
</dbReference>
<dbReference type="InterPro" id="IPR009014">
    <property type="entry name" value="Transketo_C/PFOR_II"/>
</dbReference>
<dbReference type="InterPro" id="IPR005593">
    <property type="entry name" value="Xul5P/Fru6P_PKetolase"/>
</dbReference>
<dbReference type="InterPro" id="IPR018969">
    <property type="entry name" value="Xul5P/Fru6P_PKetolase_C"/>
</dbReference>
<dbReference type="InterPro" id="IPR019790">
    <property type="entry name" value="Xul5P/Fru6P_PKetolase_CS"/>
</dbReference>
<dbReference type="InterPro" id="IPR018970">
    <property type="entry name" value="Xul5P/Fru6P_PKetolase_N"/>
</dbReference>
<dbReference type="InterPro" id="IPR019789">
    <property type="entry name" value="Xul5P/Fru6P_PKetolase_ThDP_BS"/>
</dbReference>
<dbReference type="NCBIfam" id="NF003617">
    <property type="entry name" value="PRK05261.1-2"/>
    <property type="match status" value="1"/>
</dbReference>
<dbReference type="NCBIfam" id="NF003619">
    <property type="entry name" value="PRK05261.1-4"/>
    <property type="match status" value="1"/>
</dbReference>
<dbReference type="PANTHER" id="PTHR31273">
    <property type="entry name" value="PHOSPHOKETOLASE-RELATED"/>
    <property type="match status" value="1"/>
</dbReference>
<dbReference type="PANTHER" id="PTHR31273:SF0">
    <property type="entry name" value="PHOSPHOKETOLASE-RELATED"/>
    <property type="match status" value="1"/>
</dbReference>
<dbReference type="Pfam" id="PF03894">
    <property type="entry name" value="XFP"/>
    <property type="match status" value="1"/>
</dbReference>
<dbReference type="Pfam" id="PF09363">
    <property type="entry name" value="XFP_C"/>
    <property type="match status" value="1"/>
</dbReference>
<dbReference type="Pfam" id="PF09364">
    <property type="entry name" value="XFP_N"/>
    <property type="match status" value="1"/>
</dbReference>
<dbReference type="PIRSF" id="PIRSF017245">
    <property type="entry name" value="Phosphoketolase"/>
    <property type="match status" value="1"/>
</dbReference>
<dbReference type="SUPFAM" id="SSF52518">
    <property type="entry name" value="Thiamin diphosphate-binding fold (THDP-binding)"/>
    <property type="match status" value="2"/>
</dbReference>
<dbReference type="PROSITE" id="PS60002">
    <property type="entry name" value="PHOSPHOKETOLASE_1"/>
    <property type="match status" value="1"/>
</dbReference>
<dbReference type="PROSITE" id="PS60003">
    <property type="entry name" value="PHOSPHOKETOLASE_2"/>
    <property type="match status" value="1"/>
</dbReference>
<organism>
    <name type="scientific">Nocardia farcinica (strain IFM 10152)</name>
    <dbReference type="NCBI Taxonomy" id="247156"/>
    <lineage>
        <taxon>Bacteria</taxon>
        <taxon>Bacillati</taxon>
        <taxon>Actinomycetota</taxon>
        <taxon>Actinomycetes</taxon>
        <taxon>Mycobacteriales</taxon>
        <taxon>Nocardiaceae</taxon>
        <taxon>Nocardia</taxon>
    </lineage>
</organism>
<feature type="chain" id="PRO_0000193883" description="Probable phosphoketolase">
    <location>
        <begin position="1"/>
        <end position="822"/>
    </location>
</feature>